<sequence>MAHKKAGGSTRNGRDSESKRLGVKRFGGESVLAGNIIVRQRGTKFHAGVNVGIGRDHTLFALTDGKVKFEVKGANNRKFISIEA</sequence>
<name>RL27_SHEB5</name>
<comment type="similarity">
    <text evidence="1">Belongs to the bacterial ribosomal protein bL27 family.</text>
</comment>
<protein>
    <recommendedName>
        <fullName evidence="1">Large ribosomal subunit protein bL27</fullName>
    </recommendedName>
    <alternativeName>
        <fullName evidence="3">50S ribosomal protein L27</fullName>
    </alternativeName>
</protein>
<accession>A3D179</accession>
<dbReference type="EMBL" id="CP000563">
    <property type="protein sequence ID" value="ABN60492.1"/>
    <property type="molecule type" value="Genomic_DNA"/>
</dbReference>
<dbReference type="RefSeq" id="WP_006080527.1">
    <property type="nucleotide sequence ID" value="NC_009052.1"/>
</dbReference>
<dbReference type="SMR" id="A3D179"/>
<dbReference type="STRING" id="325240.Sbal_0968"/>
<dbReference type="GeneID" id="11771357"/>
<dbReference type="KEGG" id="sbl:Sbal_0968"/>
<dbReference type="HOGENOM" id="CLU_095424_4_1_6"/>
<dbReference type="OrthoDB" id="9803474at2"/>
<dbReference type="Proteomes" id="UP000001557">
    <property type="component" value="Chromosome"/>
</dbReference>
<dbReference type="GO" id="GO:0022625">
    <property type="term" value="C:cytosolic large ribosomal subunit"/>
    <property type="evidence" value="ECO:0007669"/>
    <property type="project" value="TreeGrafter"/>
</dbReference>
<dbReference type="GO" id="GO:0003735">
    <property type="term" value="F:structural constituent of ribosome"/>
    <property type="evidence" value="ECO:0007669"/>
    <property type="project" value="InterPro"/>
</dbReference>
<dbReference type="GO" id="GO:0006412">
    <property type="term" value="P:translation"/>
    <property type="evidence" value="ECO:0007669"/>
    <property type="project" value="UniProtKB-UniRule"/>
</dbReference>
<dbReference type="FunFam" id="2.40.50.100:FF:000001">
    <property type="entry name" value="50S ribosomal protein L27"/>
    <property type="match status" value="1"/>
</dbReference>
<dbReference type="Gene3D" id="2.40.50.100">
    <property type="match status" value="1"/>
</dbReference>
<dbReference type="HAMAP" id="MF_00539">
    <property type="entry name" value="Ribosomal_bL27"/>
    <property type="match status" value="1"/>
</dbReference>
<dbReference type="InterPro" id="IPR001684">
    <property type="entry name" value="Ribosomal_bL27"/>
</dbReference>
<dbReference type="InterPro" id="IPR018261">
    <property type="entry name" value="Ribosomal_bL27_CS"/>
</dbReference>
<dbReference type="NCBIfam" id="TIGR00062">
    <property type="entry name" value="L27"/>
    <property type="match status" value="1"/>
</dbReference>
<dbReference type="PANTHER" id="PTHR15893:SF0">
    <property type="entry name" value="LARGE RIBOSOMAL SUBUNIT PROTEIN BL27M"/>
    <property type="match status" value="1"/>
</dbReference>
<dbReference type="PANTHER" id="PTHR15893">
    <property type="entry name" value="RIBOSOMAL PROTEIN L27"/>
    <property type="match status" value="1"/>
</dbReference>
<dbReference type="Pfam" id="PF01016">
    <property type="entry name" value="Ribosomal_L27"/>
    <property type="match status" value="1"/>
</dbReference>
<dbReference type="PRINTS" id="PR00063">
    <property type="entry name" value="RIBOSOMALL27"/>
</dbReference>
<dbReference type="SUPFAM" id="SSF110324">
    <property type="entry name" value="Ribosomal L27 protein-like"/>
    <property type="match status" value="1"/>
</dbReference>
<dbReference type="PROSITE" id="PS00831">
    <property type="entry name" value="RIBOSOMAL_L27"/>
    <property type="match status" value="1"/>
</dbReference>
<evidence type="ECO:0000255" key="1">
    <source>
        <dbReference type="HAMAP-Rule" id="MF_00539"/>
    </source>
</evidence>
<evidence type="ECO:0000256" key="2">
    <source>
        <dbReference type="SAM" id="MobiDB-lite"/>
    </source>
</evidence>
<evidence type="ECO:0000305" key="3"/>
<reference key="1">
    <citation type="submission" date="2007-02" db="EMBL/GenBank/DDBJ databases">
        <title>Complete sequence of chromosome of Shewanella baltica OS155.</title>
        <authorList>
            <consortium name="US DOE Joint Genome Institute"/>
            <person name="Copeland A."/>
            <person name="Lucas S."/>
            <person name="Lapidus A."/>
            <person name="Barry K."/>
            <person name="Detter J.C."/>
            <person name="Glavina del Rio T."/>
            <person name="Hammon N."/>
            <person name="Israni S."/>
            <person name="Dalin E."/>
            <person name="Tice H."/>
            <person name="Pitluck S."/>
            <person name="Sims D.R."/>
            <person name="Brettin T."/>
            <person name="Bruce D."/>
            <person name="Han C."/>
            <person name="Tapia R."/>
            <person name="Brainard J."/>
            <person name="Schmutz J."/>
            <person name="Larimer F."/>
            <person name="Land M."/>
            <person name="Hauser L."/>
            <person name="Kyrpides N."/>
            <person name="Mikhailova N."/>
            <person name="Brettar I."/>
            <person name="Klappenbach J."/>
            <person name="Konstantinidis K."/>
            <person name="Rodrigues J."/>
            <person name="Tiedje J."/>
            <person name="Richardson P."/>
        </authorList>
    </citation>
    <scope>NUCLEOTIDE SEQUENCE [LARGE SCALE GENOMIC DNA]</scope>
    <source>
        <strain>OS155 / ATCC BAA-1091</strain>
    </source>
</reference>
<organism>
    <name type="scientific">Shewanella baltica (strain OS155 / ATCC BAA-1091)</name>
    <dbReference type="NCBI Taxonomy" id="325240"/>
    <lineage>
        <taxon>Bacteria</taxon>
        <taxon>Pseudomonadati</taxon>
        <taxon>Pseudomonadota</taxon>
        <taxon>Gammaproteobacteria</taxon>
        <taxon>Alteromonadales</taxon>
        <taxon>Shewanellaceae</taxon>
        <taxon>Shewanella</taxon>
    </lineage>
</organism>
<proteinExistence type="inferred from homology"/>
<keyword id="KW-1185">Reference proteome</keyword>
<keyword id="KW-0687">Ribonucleoprotein</keyword>
<keyword id="KW-0689">Ribosomal protein</keyword>
<gene>
    <name evidence="1" type="primary">rpmA</name>
    <name type="ordered locus">Sbal_0968</name>
</gene>
<feature type="chain" id="PRO_1000017597" description="Large ribosomal subunit protein bL27">
    <location>
        <begin position="1"/>
        <end position="84"/>
    </location>
</feature>
<feature type="region of interest" description="Disordered" evidence="2">
    <location>
        <begin position="1"/>
        <end position="22"/>
    </location>
</feature>